<evidence type="ECO:0000255" key="1">
    <source>
        <dbReference type="HAMAP-Rule" id="MF_00270"/>
    </source>
</evidence>
<evidence type="ECO:0000305" key="2"/>
<protein>
    <recommendedName>
        <fullName evidence="1">Small ribosomal subunit protein bS18c</fullName>
    </recommendedName>
    <alternativeName>
        <fullName evidence="2">30S ribosomal protein S18, chloroplastic</fullName>
    </alternativeName>
</protein>
<reference key="1">
    <citation type="submission" date="2007-03" db="EMBL/GenBank/DDBJ databases">
        <title>Sequencing analysis of Lepidium virginicum JO26 chloroplast DNA.</title>
        <authorList>
            <person name="Hosouchi T."/>
            <person name="Tsuruoka H."/>
            <person name="Kotani H."/>
        </authorList>
    </citation>
    <scope>NUCLEOTIDE SEQUENCE [LARGE SCALE GENOMIC DNA]</scope>
</reference>
<comment type="subunit">
    <text evidence="1">Part of the 30S ribosomal subunit.</text>
</comment>
<comment type="subcellular location">
    <subcellularLocation>
        <location>Plastid</location>
        <location>Chloroplast</location>
    </subcellularLocation>
</comment>
<comment type="similarity">
    <text evidence="1">Belongs to the bacterial ribosomal protein bS18 family.</text>
</comment>
<keyword id="KW-0150">Chloroplast</keyword>
<keyword id="KW-0934">Plastid</keyword>
<keyword id="KW-0687">Ribonucleoprotein</keyword>
<keyword id="KW-0689">Ribosomal protein</keyword>
<keyword id="KW-0694">RNA-binding</keyword>
<keyword id="KW-0699">rRNA-binding</keyword>
<geneLocation type="chloroplast"/>
<gene>
    <name evidence="1" type="primary">rps18</name>
</gene>
<proteinExistence type="inferred from homology"/>
<sequence>MNKSKRLFTKSKRSFRRRLPPIQSGDRIDYRNMSLISRFISEQGKILSRRVNRVTLKQQRLITIAINQARILSLLPFLNNQKQFERSESTPRTTSLRTRKK</sequence>
<feature type="chain" id="PRO_0000345591" description="Small ribosomal subunit protein bS18c">
    <location>
        <begin position="1"/>
        <end position="101"/>
    </location>
</feature>
<dbReference type="EMBL" id="AP009374">
    <property type="protein sequence ID" value="BAF50483.1"/>
    <property type="molecule type" value="Genomic_DNA"/>
</dbReference>
<dbReference type="RefSeq" id="YP_001123659.1">
    <property type="nucleotide sequence ID" value="NC_009273.1"/>
</dbReference>
<dbReference type="SMR" id="A4QLC8"/>
<dbReference type="GeneID" id="4962025"/>
<dbReference type="GO" id="GO:0009507">
    <property type="term" value="C:chloroplast"/>
    <property type="evidence" value="ECO:0007669"/>
    <property type="project" value="UniProtKB-SubCell"/>
</dbReference>
<dbReference type="GO" id="GO:0005763">
    <property type="term" value="C:mitochondrial small ribosomal subunit"/>
    <property type="evidence" value="ECO:0007669"/>
    <property type="project" value="TreeGrafter"/>
</dbReference>
<dbReference type="GO" id="GO:0070181">
    <property type="term" value="F:small ribosomal subunit rRNA binding"/>
    <property type="evidence" value="ECO:0007669"/>
    <property type="project" value="TreeGrafter"/>
</dbReference>
<dbReference type="GO" id="GO:0003735">
    <property type="term" value="F:structural constituent of ribosome"/>
    <property type="evidence" value="ECO:0007669"/>
    <property type="project" value="InterPro"/>
</dbReference>
<dbReference type="GO" id="GO:0006412">
    <property type="term" value="P:translation"/>
    <property type="evidence" value="ECO:0007669"/>
    <property type="project" value="UniProtKB-UniRule"/>
</dbReference>
<dbReference type="FunFam" id="4.10.640.10:FF:000002">
    <property type="entry name" value="30S ribosomal protein S18, chloroplastic"/>
    <property type="match status" value="1"/>
</dbReference>
<dbReference type="Gene3D" id="4.10.640.10">
    <property type="entry name" value="Ribosomal protein S18"/>
    <property type="match status" value="1"/>
</dbReference>
<dbReference type="HAMAP" id="MF_00270">
    <property type="entry name" value="Ribosomal_bS18"/>
    <property type="match status" value="1"/>
</dbReference>
<dbReference type="InterPro" id="IPR001648">
    <property type="entry name" value="Ribosomal_bS18"/>
</dbReference>
<dbReference type="InterPro" id="IPR018275">
    <property type="entry name" value="Ribosomal_bS18_CS"/>
</dbReference>
<dbReference type="InterPro" id="IPR036870">
    <property type="entry name" value="Ribosomal_bS18_sf"/>
</dbReference>
<dbReference type="NCBIfam" id="TIGR00165">
    <property type="entry name" value="S18"/>
    <property type="match status" value="1"/>
</dbReference>
<dbReference type="PANTHER" id="PTHR13479">
    <property type="entry name" value="30S RIBOSOMAL PROTEIN S18"/>
    <property type="match status" value="1"/>
</dbReference>
<dbReference type="PANTHER" id="PTHR13479:SF40">
    <property type="entry name" value="SMALL RIBOSOMAL SUBUNIT PROTEIN BS18M"/>
    <property type="match status" value="1"/>
</dbReference>
<dbReference type="Pfam" id="PF01084">
    <property type="entry name" value="Ribosomal_S18"/>
    <property type="match status" value="1"/>
</dbReference>
<dbReference type="PRINTS" id="PR00974">
    <property type="entry name" value="RIBOSOMALS18"/>
</dbReference>
<dbReference type="SUPFAM" id="SSF46911">
    <property type="entry name" value="Ribosomal protein S18"/>
    <property type="match status" value="1"/>
</dbReference>
<dbReference type="PROSITE" id="PS00057">
    <property type="entry name" value="RIBOSOMAL_S18"/>
    <property type="match status" value="1"/>
</dbReference>
<name>RR18_LEPVR</name>
<accession>A4QLC8</accession>
<organism>
    <name type="scientific">Lepidium virginicum</name>
    <name type="common">Virginia pepperweed</name>
    <dbReference type="NCBI Taxonomy" id="59292"/>
    <lineage>
        <taxon>Eukaryota</taxon>
        <taxon>Viridiplantae</taxon>
        <taxon>Streptophyta</taxon>
        <taxon>Embryophyta</taxon>
        <taxon>Tracheophyta</taxon>
        <taxon>Spermatophyta</taxon>
        <taxon>Magnoliopsida</taxon>
        <taxon>eudicotyledons</taxon>
        <taxon>Gunneridae</taxon>
        <taxon>Pentapetalae</taxon>
        <taxon>rosids</taxon>
        <taxon>malvids</taxon>
        <taxon>Brassicales</taxon>
        <taxon>Brassicaceae</taxon>
        <taxon>Lepidieae</taxon>
        <taxon>Lepidium</taxon>
    </lineage>
</organism>